<protein>
    <recommendedName>
        <fullName evidence="1">Phenylalanine--tRNA ligase alpha subunit</fullName>
        <ecNumber evidence="1">6.1.1.20</ecNumber>
    </recommendedName>
    <alternativeName>
        <fullName evidence="1">Phenylalanyl-tRNA synthetase alpha subunit</fullName>
        <shortName evidence="1">PheRS</shortName>
    </alternativeName>
</protein>
<comment type="catalytic activity">
    <reaction evidence="1">
        <text>tRNA(Phe) + L-phenylalanine + ATP = L-phenylalanyl-tRNA(Phe) + AMP + diphosphate + H(+)</text>
        <dbReference type="Rhea" id="RHEA:19413"/>
        <dbReference type="Rhea" id="RHEA-COMP:9668"/>
        <dbReference type="Rhea" id="RHEA-COMP:9699"/>
        <dbReference type="ChEBI" id="CHEBI:15378"/>
        <dbReference type="ChEBI" id="CHEBI:30616"/>
        <dbReference type="ChEBI" id="CHEBI:33019"/>
        <dbReference type="ChEBI" id="CHEBI:58095"/>
        <dbReference type="ChEBI" id="CHEBI:78442"/>
        <dbReference type="ChEBI" id="CHEBI:78531"/>
        <dbReference type="ChEBI" id="CHEBI:456215"/>
        <dbReference type="EC" id="6.1.1.20"/>
    </reaction>
</comment>
<comment type="cofactor">
    <cofactor evidence="1">
        <name>Mg(2+)</name>
        <dbReference type="ChEBI" id="CHEBI:18420"/>
    </cofactor>
    <text evidence="1">Binds 2 magnesium ions per tetramer.</text>
</comment>
<comment type="subunit">
    <text evidence="1">Tetramer of two alpha and two beta subunits.</text>
</comment>
<comment type="subcellular location">
    <subcellularLocation>
        <location evidence="1">Cytoplasm</location>
    </subcellularLocation>
</comment>
<comment type="similarity">
    <text evidence="1">Belongs to the class-II aminoacyl-tRNA synthetase family. Phe-tRNA synthetase alpha subunit type 1 subfamily.</text>
</comment>
<proteinExistence type="inferred from homology"/>
<evidence type="ECO:0000255" key="1">
    <source>
        <dbReference type="HAMAP-Rule" id="MF_00281"/>
    </source>
</evidence>
<keyword id="KW-0030">Aminoacyl-tRNA synthetase</keyword>
<keyword id="KW-0067">ATP-binding</keyword>
<keyword id="KW-0963">Cytoplasm</keyword>
<keyword id="KW-0436">Ligase</keyword>
<keyword id="KW-0460">Magnesium</keyword>
<keyword id="KW-0479">Metal-binding</keyword>
<keyword id="KW-0547">Nucleotide-binding</keyword>
<keyword id="KW-0648">Protein biosynthesis</keyword>
<organism>
    <name type="scientific">Thermobifida fusca (strain YX)</name>
    <dbReference type="NCBI Taxonomy" id="269800"/>
    <lineage>
        <taxon>Bacteria</taxon>
        <taxon>Bacillati</taxon>
        <taxon>Actinomycetota</taxon>
        <taxon>Actinomycetes</taxon>
        <taxon>Streptosporangiales</taxon>
        <taxon>Nocardiopsidaceae</taxon>
        <taxon>Thermobifida</taxon>
    </lineage>
</organism>
<sequence length="372" mass="41049">MSAPNHSYDPVEVTPLHPDEVARMRDEALEAIAKASTLEELKKVRIAHAGDRSPLALANREIGALPPAARADAGRRVGGARREVNEALKARQAQLEEEHEARVLVEETVDVTLPYDRIPRGARHPLTTIAERMADIFVGMGFEIAEGPEVEAEWYNFDALNFLPDHPARTMQDTFFIAGPDGEESGMVLRTHTSPVQVRALLDRELPVYVVVPGRTFRTDELDATHSPVFHQLEGLVVDEGITLAHLRGAIQLFVERMFGEGLRTRMRPSYFPFTEPSAEVDMECFVCRGASVGNPEAPCRTCSSEGWIEIGGCGVVNPRVLVAAGVDTERYSGWAFGLGIERTLMFAHGVKDMHDMVEGDVRFTAAFGMEM</sequence>
<feature type="chain" id="PRO_0000232033" description="Phenylalanine--tRNA ligase alpha subunit">
    <location>
        <begin position="1"/>
        <end position="372"/>
    </location>
</feature>
<feature type="binding site" evidence="1">
    <location>
        <position position="276"/>
    </location>
    <ligand>
        <name>Mg(2+)</name>
        <dbReference type="ChEBI" id="CHEBI:18420"/>
        <note>shared with beta subunit</note>
    </ligand>
</feature>
<reference key="1">
    <citation type="journal article" date="2007" name="J. Bacteriol.">
        <title>Genome sequence and analysis of the soil cellulolytic actinomycete Thermobifida fusca YX.</title>
        <authorList>
            <person name="Lykidis A."/>
            <person name="Mavromatis K."/>
            <person name="Ivanova N."/>
            <person name="Anderson I."/>
            <person name="Land M."/>
            <person name="DiBartolo G."/>
            <person name="Martinez M."/>
            <person name="Lapidus A."/>
            <person name="Lucas S."/>
            <person name="Copeland A."/>
            <person name="Richardson P."/>
            <person name="Wilson D.B."/>
            <person name="Kyrpides N."/>
        </authorList>
    </citation>
    <scope>NUCLEOTIDE SEQUENCE [LARGE SCALE GENOMIC DNA]</scope>
    <source>
        <strain>YX</strain>
    </source>
</reference>
<accession>Q47N75</accession>
<dbReference type="EC" id="6.1.1.20" evidence="1"/>
<dbReference type="EMBL" id="CP000088">
    <property type="protein sequence ID" value="AAZ56094.1"/>
    <property type="molecule type" value="Genomic_DNA"/>
</dbReference>
<dbReference type="RefSeq" id="WP_011292484.1">
    <property type="nucleotide sequence ID" value="NC_007333.1"/>
</dbReference>
<dbReference type="SMR" id="Q47N75"/>
<dbReference type="STRING" id="269800.Tfu_2061"/>
<dbReference type="KEGG" id="tfu:Tfu_2061"/>
<dbReference type="eggNOG" id="COG0016">
    <property type="taxonomic scope" value="Bacteria"/>
</dbReference>
<dbReference type="HOGENOM" id="CLU_025086_0_1_11"/>
<dbReference type="OrthoDB" id="9800719at2"/>
<dbReference type="GO" id="GO:0005737">
    <property type="term" value="C:cytoplasm"/>
    <property type="evidence" value="ECO:0007669"/>
    <property type="project" value="UniProtKB-SubCell"/>
</dbReference>
<dbReference type="GO" id="GO:0005524">
    <property type="term" value="F:ATP binding"/>
    <property type="evidence" value="ECO:0007669"/>
    <property type="project" value="UniProtKB-UniRule"/>
</dbReference>
<dbReference type="GO" id="GO:0000287">
    <property type="term" value="F:magnesium ion binding"/>
    <property type="evidence" value="ECO:0007669"/>
    <property type="project" value="UniProtKB-UniRule"/>
</dbReference>
<dbReference type="GO" id="GO:0004826">
    <property type="term" value="F:phenylalanine-tRNA ligase activity"/>
    <property type="evidence" value="ECO:0007669"/>
    <property type="project" value="UniProtKB-UniRule"/>
</dbReference>
<dbReference type="GO" id="GO:0000049">
    <property type="term" value="F:tRNA binding"/>
    <property type="evidence" value="ECO:0007669"/>
    <property type="project" value="InterPro"/>
</dbReference>
<dbReference type="GO" id="GO:0006432">
    <property type="term" value="P:phenylalanyl-tRNA aminoacylation"/>
    <property type="evidence" value="ECO:0007669"/>
    <property type="project" value="UniProtKB-UniRule"/>
</dbReference>
<dbReference type="CDD" id="cd00496">
    <property type="entry name" value="PheRS_alpha_core"/>
    <property type="match status" value="1"/>
</dbReference>
<dbReference type="FunFam" id="3.30.930.10:FF:000003">
    <property type="entry name" value="Phenylalanine--tRNA ligase alpha subunit"/>
    <property type="match status" value="1"/>
</dbReference>
<dbReference type="Gene3D" id="3.30.930.10">
    <property type="entry name" value="Bira Bifunctional Protein, Domain 2"/>
    <property type="match status" value="1"/>
</dbReference>
<dbReference type="HAMAP" id="MF_00281">
    <property type="entry name" value="Phe_tRNA_synth_alpha1"/>
    <property type="match status" value="1"/>
</dbReference>
<dbReference type="InterPro" id="IPR006195">
    <property type="entry name" value="aa-tRNA-synth_II"/>
</dbReference>
<dbReference type="InterPro" id="IPR045864">
    <property type="entry name" value="aa-tRNA-synth_II/BPL/LPL"/>
</dbReference>
<dbReference type="InterPro" id="IPR004529">
    <property type="entry name" value="Phe-tRNA-synth_IIc_asu"/>
</dbReference>
<dbReference type="InterPro" id="IPR004188">
    <property type="entry name" value="Phe-tRNA_ligase_II_N"/>
</dbReference>
<dbReference type="InterPro" id="IPR022911">
    <property type="entry name" value="Phe_tRNA_ligase_alpha1_bac"/>
</dbReference>
<dbReference type="InterPro" id="IPR002319">
    <property type="entry name" value="Phenylalanyl-tRNA_Synthase"/>
</dbReference>
<dbReference type="InterPro" id="IPR010978">
    <property type="entry name" value="tRNA-bd_arm"/>
</dbReference>
<dbReference type="NCBIfam" id="TIGR00468">
    <property type="entry name" value="pheS"/>
    <property type="match status" value="1"/>
</dbReference>
<dbReference type="PANTHER" id="PTHR11538:SF41">
    <property type="entry name" value="PHENYLALANINE--TRNA LIGASE, MITOCHONDRIAL"/>
    <property type="match status" value="1"/>
</dbReference>
<dbReference type="PANTHER" id="PTHR11538">
    <property type="entry name" value="PHENYLALANYL-TRNA SYNTHETASE"/>
    <property type="match status" value="1"/>
</dbReference>
<dbReference type="Pfam" id="PF02912">
    <property type="entry name" value="Phe_tRNA-synt_N"/>
    <property type="match status" value="1"/>
</dbReference>
<dbReference type="Pfam" id="PF01409">
    <property type="entry name" value="tRNA-synt_2d"/>
    <property type="match status" value="1"/>
</dbReference>
<dbReference type="SUPFAM" id="SSF55681">
    <property type="entry name" value="Class II aaRS and biotin synthetases"/>
    <property type="match status" value="1"/>
</dbReference>
<dbReference type="SUPFAM" id="SSF46589">
    <property type="entry name" value="tRNA-binding arm"/>
    <property type="match status" value="1"/>
</dbReference>
<dbReference type="PROSITE" id="PS50862">
    <property type="entry name" value="AA_TRNA_LIGASE_II"/>
    <property type="match status" value="1"/>
</dbReference>
<gene>
    <name evidence="1" type="primary">pheS</name>
    <name type="ordered locus">Tfu_2061</name>
</gene>
<name>SYFA_THEFY</name>